<gene>
    <name evidence="1" type="primary">glnS</name>
    <name type="ordered locus">YPN_1116</name>
    <name type="ORF">YP516_1219</name>
</gene>
<feature type="chain" id="PRO_1000016302" description="Glutamine--tRNA ligase">
    <location>
        <begin position="1"/>
        <end position="555"/>
    </location>
</feature>
<feature type="short sequence motif" description="'HIGH' region" evidence="1">
    <location>
        <begin position="34"/>
        <end position="44"/>
    </location>
</feature>
<feature type="short sequence motif" description="'KMSKS' region" evidence="1">
    <location>
        <begin position="268"/>
        <end position="272"/>
    </location>
</feature>
<feature type="binding site" evidence="1">
    <location>
        <begin position="35"/>
        <end position="37"/>
    </location>
    <ligand>
        <name>ATP</name>
        <dbReference type="ChEBI" id="CHEBI:30616"/>
    </ligand>
</feature>
<feature type="binding site" evidence="1">
    <location>
        <begin position="41"/>
        <end position="47"/>
    </location>
    <ligand>
        <name>ATP</name>
        <dbReference type="ChEBI" id="CHEBI:30616"/>
    </ligand>
</feature>
<feature type="binding site" evidence="1">
    <location>
        <position position="67"/>
    </location>
    <ligand>
        <name>L-glutamine</name>
        <dbReference type="ChEBI" id="CHEBI:58359"/>
    </ligand>
</feature>
<feature type="binding site" evidence="1">
    <location>
        <position position="212"/>
    </location>
    <ligand>
        <name>L-glutamine</name>
        <dbReference type="ChEBI" id="CHEBI:58359"/>
    </ligand>
</feature>
<feature type="binding site" evidence="1">
    <location>
        <position position="231"/>
    </location>
    <ligand>
        <name>ATP</name>
        <dbReference type="ChEBI" id="CHEBI:30616"/>
    </ligand>
</feature>
<feature type="binding site" evidence="1">
    <location>
        <begin position="261"/>
        <end position="262"/>
    </location>
    <ligand>
        <name>ATP</name>
        <dbReference type="ChEBI" id="CHEBI:30616"/>
    </ligand>
</feature>
<feature type="binding site" evidence="1">
    <location>
        <begin position="269"/>
        <end position="271"/>
    </location>
    <ligand>
        <name>ATP</name>
        <dbReference type="ChEBI" id="CHEBI:30616"/>
    </ligand>
</feature>
<proteinExistence type="inferred from homology"/>
<organism>
    <name type="scientific">Yersinia pestis bv. Antiqua (strain Nepal516)</name>
    <dbReference type="NCBI Taxonomy" id="377628"/>
    <lineage>
        <taxon>Bacteria</taxon>
        <taxon>Pseudomonadati</taxon>
        <taxon>Pseudomonadota</taxon>
        <taxon>Gammaproteobacteria</taxon>
        <taxon>Enterobacterales</taxon>
        <taxon>Yersiniaceae</taxon>
        <taxon>Yersinia</taxon>
    </lineage>
</organism>
<accession>Q1CKN4</accession>
<accession>C4GR51</accession>
<evidence type="ECO:0000255" key="1">
    <source>
        <dbReference type="HAMAP-Rule" id="MF_00126"/>
    </source>
</evidence>
<sequence length="555" mass="63751">MSEAEARPSNFIRQIIDEDLASGKHTSVHTRFPPEPNGYLHIGHAKSICLNFGIAEDYQGQCNLRFDDTNPVKEDVEFVESIKRDVEWLGFTWSGDVRYSSDYFDQLYQYAVELINKGLAYVDELTPEQMREYRGTLTAPGKNSPYRDRSVEENLALFEKMRAGGFAEGTACLRAKIDMASPFIVMRDPVLYRIKFAEHHQSGNKWCIYPMYDFTHCISDALEGITHSLCTLEFQDNRRLYDWVLDNISIDCHPRQYEFSRLNLEYTIMSKRKLNQLVTEKVVEGWDDPRMPTISGLRRRGYTAASIREFCRRIGVTKQDNNVEMMSLESCIRDDLNEHAPRAMAVLDPIKVVIENRAAGEEWLTMPNHPNNPEMGSRQVPFDSEIYIDRADFREEANKQYKRLVLGKEVRLRNAYVIKAERVEKDAEGNVTTLYCSYDAETLNKDPADGRKVKGVIHWVSVAHALPAEIRLYDRLFNVPNPAAAEDFLSTINPESLVIRQGFVEPSLADAVSDKTYQFEREGYFCADSRYSRPGALVFNRTVGLRDTWAAKATQ</sequence>
<dbReference type="EC" id="6.1.1.18" evidence="1"/>
<dbReference type="EMBL" id="CP000305">
    <property type="protein sequence ID" value="ABG17446.1"/>
    <property type="molecule type" value="Genomic_DNA"/>
</dbReference>
<dbReference type="EMBL" id="ACNQ01000008">
    <property type="protein sequence ID" value="EEO77542.1"/>
    <property type="molecule type" value="Genomic_DNA"/>
</dbReference>
<dbReference type="RefSeq" id="WP_002210354.1">
    <property type="nucleotide sequence ID" value="NZ_ACNQ01000008.1"/>
</dbReference>
<dbReference type="SMR" id="Q1CKN4"/>
<dbReference type="GeneID" id="57976061"/>
<dbReference type="KEGG" id="ypn:YPN_1116"/>
<dbReference type="HOGENOM" id="CLU_001882_2_3_6"/>
<dbReference type="Proteomes" id="UP000008936">
    <property type="component" value="Chromosome"/>
</dbReference>
<dbReference type="GO" id="GO:0005829">
    <property type="term" value="C:cytosol"/>
    <property type="evidence" value="ECO:0007669"/>
    <property type="project" value="TreeGrafter"/>
</dbReference>
<dbReference type="GO" id="GO:0005524">
    <property type="term" value="F:ATP binding"/>
    <property type="evidence" value="ECO:0007669"/>
    <property type="project" value="UniProtKB-UniRule"/>
</dbReference>
<dbReference type="GO" id="GO:0004819">
    <property type="term" value="F:glutamine-tRNA ligase activity"/>
    <property type="evidence" value="ECO:0007669"/>
    <property type="project" value="UniProtKB-UniRule"/>
</dbReference>
<dbReference type="GO" id="GO:0006425">
    <property type="term" value="P:glutaminyl-tRNA aminoacylation"/>
    <property type="evidence" value="ECO:0007669"/>
    <property type="project" value="InterPro"/>
</dbReference>
<dbReference type="GO" id="GO:0006424">
    <property type="term" value="P:glutamyl-tRNA aminoacylation"/>
    <property type="evidence" value="ECO:0007669"/>
    <property type="project" value="UniProtKB-UniRule"/>
</dbReference>
<dbReference type="CDD" id="cd00807">
    <property type="entry name" value="GlnRS_core"/>
    <property type="match status" value="1"/>
</dbReference>
<dbReference type="FunFam" id="1.10.1160.10:FF:000001">
    <property type="entry name" value="Glutamine--tRNA ligase"/>
    <property type="match status" value="1"/>
</dbReference>
<dbReference type="FunFam" id="2.40.240.10:FF:000001">
    <property type="entry name" value="Glutamine--tRNA ligase"/>
    <property type="match status" value="1"/>
</dbReference>
<dbReference type="FunFam" id="2.40.240.10:FF:000003">
    <property type="entry name" value="Glutamine--tRNA ligase"/>
    <property type="match status" value="1"/>
</dbReference>
<dbReference type="FunFam" id="3.90.800.10:FF:000001">
    <property type="entry name" value="Glutamine--tRNA ligase"/>
    <property type="match status" value="1"/>
</dbReference>
<dbReference type="FunFam" id="3.40.50.620:FF:000037">
    <property type="entry name" value="Glutamine--tRNA ligase cytoplasmic"/>
    <property type="match status" value="1"/>
</dbReference>
<dbReference type="Gene3D" id="1.10.1160.10">
    <property type="entry name" value="Glutamyl-trna Synthetase, Domain 2"/>
    <property type="match status" value="1"/>
</dbReference>
<dbReference type="Gene3D" id="3.90.800.10">
    <property type="entry name" value="Glutamyl-tRNA Synthetase, Domain 3"/>
    <property type="match status" value="1"/>
</dbReference>
<dbReference type="Gene3D" id="3.40.50.620">
    <property type="entry name" value="HUPs"/>
    <property type="match status" value="1"/>
</dbReference>
<dbReference type="Gene3D" id="2.40.240.10">
    <property type="entry name" value="Ribosomal Protein L25, Chain P"/>
    <property type="match status" value="2"/>
</dbReference>
<dbReference type="HAMAP" id="MF_00126">
    <property type="entry name" value="Gln_tRNA_synth"/>
    <property type="match status" value="1"/>
</dbReference>
<dbReference type="InterPro" id="IPR001412">
    <property type="entry name" value="aa-tRNA-synth_I_CS"/>
</dbReference>
<dbReference type="InterPro" id="IPR004514">
    <property type="entry name" value="Gln-tRNA-synth"/>
</dbReference>
<dbReference type="InterPro" id="IPR050132">
    <property type="entry name" value="Gln/Glu-tRNA_Ligase"/>
</dbReference>
<dbReference type="InterPro" id="IPR022861">
    <property type="entry name" value="Gln_tRNA_ligase_bac"/>
</dbReference>
<dbReference type="InterPro" id="IPR000924">
    <property type="entry name" value="Glu/Gln-tRNA-synth"/>
</dbReference>
<dbReference type="InterPro" id="IPR020058">
    <property type="entry name" value="Glu/Gln-tRNA-synth_Ib_cat-dom"/>
</dbReference>
<dbReference type="InterPro" id="IPR020059">
    <property type="entry name" value="Glu/Gln-tRNA-synth_Ib_codon-bd"/>
</dbReference>
<dbReference type="InterPro" id="IPR020061">
    <property type="entry name" value="Glu_tRNA_lig_a-bdl"/>
</dbReference>
<dbReference type="InterPro" id="IPR020056">
    <property type="entry name" value="Rbsml_bL25/Gln-tRNA_synth_N"/>
</dbReference>
<dbReference type="InterPro" id="IPR011035">
    <property type="entry name" value="Ribosomal_bL25/Gln-tRNA_synth"/>
</dbReference>
<dbReference type="InterPro" id="IPR014729">
    <property type="entry name" value="Rossmann-like_a/b/a_fold"/>
</dbReference>
<dbReference type="InterPro" id="IPR049437">
    <property type="entry name" value="tRNA-synt_1c_C2"/>
</dbReference>
<dbReference type="NCBIfam" id="TIGR00440">
    <property type="entry name" value="glnS"/>
    <property type="match status" value="1"/>
</dbReference>
<dbReference type="NCBIfam" id="NF011291">
    <property type="entry name" value="PRK14703.1"/>
    <property type="match status" value="1"/>
</dbReference>
<dbReference type="PANTHER" id="PTHR43097:SF5">
    <property type="entry name" value="GLUTAMATE--TRNA LIGASE"/>
    <property type="match status" value="1"/>
</dbReference>
<dbReference type="PANTHER" id="PTHR43097">
    <property type="entry name" value="GLUTAMINE-TRNA LIGASE"/>
    <property type="match status" value="1"/>
</dbReference>
<dbReference type="Pfam" id="PF00749">
    <property type="entry name" value="tRNA-synt_1c"/>
    <property type="match status" value="1"/>
</dbReference>
<dbReference type="Pfam" id="PF03950">
    <property type="entry name" value="tRNA-synt_1c_C"/>
    <property type="match status" value="1"/>
</dbReference>
<dbReference type="Pfam" id="PF20974">
    <property type="entry name" value="tRNA-synt_1c_C2"/>
    <property type="match status" value="1"/>
</dbReference>
<dbReference type="PRINTS" id="PR00987">
    <property type="entry name" value="TRNASYNTHGLU"/>
</dbReference>
<dbReference type="SUPFAM" id="SSF52374">
    <property type="entry name" value="Nucleotidylyl transferase"/>
    <property type="match status" value="1"/>
</dbReference>
<dbReference type="SUPFAM" id="SSF50715">
    <property type="entry name" value="Ribosomal protein L25-like"/>
    <property type="match status" value="1"/>
</dbReference>
<dbReference type="PROSITE" id="PS00178">
    <property type="entry name" value="AA_TRNA_LIGASE_I"/>
    <property type="match status" value="1"/>
</dbReference>
<protein>
    <recommendedName>
        <fullName evidence="1">Glutamine--tRNA ligase</fullName>
        <ecNumber evidence="1">6.1.1.18</ecNumber>
    </recommendedName>
    <alternativeName>
        <fullName evidence="1">Glutaminyl-tRNA synthetase</fullName>
        <shortName evidence="1">GlnRS</shortName>
    </alternativeName>
</protein>
<name>SYQ_YERPN</name>
<reference key="1">
    <citation type="journal article" date="2006" name="J. Bacteriol.">
        <title>Complete genome sequence of Yersinia pestis strains Antiqua and Nepal516: evidence of gene reduction in an emerging pathogen.</title>
        <authorList>
            <person name="Chain P.S.G."/>
            <person name="Hu P."/>
            <person name="Malfatti S.A."/>
            <person name="Radnedge L."/>
            <person name="Larimer F."/>
            <person name="Vergez L.M."/>
            <person name="Worsham P."/>
            <person name="Chu M.C."/>
            <person name="Andersen G.L."/>
        </authorList>
    </citation>
    <scope>NUCLEOTIDE SEQUENCE [LARGE SCALE GENOMIC DNA]</scope>
    <source>
        <strain>Nepal516</strain>
    </source>
</reference>
<reference key="2">
    <citation type="submission" date="2009-04" db="EMBL/GenBank/DDBJ databases">
        <title>Yersinia pestis Nepal516A whole genome shotgun sequencing project.</title>
        <authorList>
            <person name="Plunkett G. III"/>
            <person name="Anderson B.D."/>
            <person name="Baumler D.J."/>
            <person name="Burland V."/>
            <person name="Cabot E.L."/>
            <person name="Glasner J.D."/>
            <person name="Mau B."/>
            <person name="Neeno-Eckwall E."/>
            <person name="Perna N.T."/>
            <person name="Munk A.C."/>
            <person name="Tapia R."/>
            <person name="Green L.D."/>
            <person name="Rogers Y.C."/>
            <person name="Detter J.C."/>
            <person name="Bruce D.C."/>
            <person name="Brettin T.S."/>
        </authorList>
    </citation>
    <scope>NUCLEOTIDE SEQUENCE [LARGE SCALE GENOMIC DNA]</scope>
    <source>
        <strain>Nepal516</strain>
    </source>
</reference>
<keyword id="KW-0030">Aminoacyl-tRNA synthetase</keyword>
<keyword id="KW-0067">ATP-binding</keyword>
<keyword id="KW-0963">Cytoplasm</keyword>
<keyword id="KW-0436">Ligase</keyword>
<keyword id="KW-0547">Nucleotide-binding</keyword>
<keyword id="KW-0648">Protein biosynthesis</keyword>
<comment type="catalytic activity">
    <reaction evidence="1">
        <text>tRNA(Gln) + L-glutamine + ATP = L-glutaminyl-tRNA(Gln) + AMP + diphosphate</text>
        <dbReference type="Rhea" id="RHEA:20121"/>
        <dbReference type="Rhea" id="RHEA-COMP:9662"/>
        <dbReference type="Rhea" id="RHEA-COMP:9681"/>
        <dbReference type="ChEBI" id="CHEBI:30616"/>
        <dbReference type="ChEBI" id="CHEBI:33019"/>
        <dbReference type="ChEBI" id="CHEBI:58359"/>
        <dbReference type="ChEBI" id="CHEBI:78442"/>
        <dbReference type="ChEBI" id="CHEBI:78521"/>
        <dbReference type="ChEBI" id="CHEBI:456215"/>
        <dbReference type="EC" id="6.1.1.18"/>
    </reaction>
</comment>
<comment type="subunit">
    <text evidence="1">Monomer.</text>
</comment>
<comment type="subcellular location">
    <subcellularLocation>
        <location evidence="1">Cytoplasm</location>
    </subcellularLocation>
</comment>
<comment type="similarity">
    <text evidence="1">Belongs to the class-I aminoacyl-tRNA synthetase family.</text>
</comment>